<accession>Q969Z3</accession>
<accession>B2D0R5</accession>
<accession>D3DTB3</accession>
<accession>Q0JSK7</accession>
<accession>Q5VT67</accession>
<accession>Q5VXC7</accession>
<accession>Q7L317</accession>
<accession>Q9H066</accession>
<accession>Q9NWU0</accession>
<proteinExistence type="evidence at protein level"/>
<protein>
    <recommendedName>
        <fullName evidence="10">Mitochondrial amidoxime reducing component 2</fullName>
        <shortName evidence="10">mARC2</shortName>
        <ecNumber>1.7.-.-</ecNumber>
    </recommendedName>
    <alternativeName>
        <fullName>Molybdenum cofactor sulfurase C-terminal domain-containing protein 2</fullName>
        <shortName>MOSC domain-containing protein 2</shortName>
        <shortName>Moco sulfurase C-terminal domain-containing protein 2</shortName>
    </alternativeName>
</protein>
<reference key="1">
    <citation type="journal article" date="2001" name="Genome Res.">
        <title>Towards a catalog of human genes and proteins: sequencing and analysis of 500 novel complete protein coding human cDNAs.</title>
        <authorList>
            <person name="Wiemann S."/>
            <person name="Weil B."/>
            <person name="Wellenreuther R."/>
            <person name="Gassenhuber J."/>
            <person name="Glassl S."/>
            <person name="Ansorge W."/>
            <person name="Boecher M."/>
            <person name="Bloecker H."/>
            <person name="Bauersachs S."/>
            <person name="Blum H."/>
            <person name="Lauber J."/>
            <person name="Duesterhoeft A."/>
            <person name="Beyer A."/>
            <person name="Koehrer K."/>
            <person name="Strack N."/>
            <person name="Mewes H.-W."/>
            <person name="Ottenwaelder B."/>
            <person name="Obermaier B."/>
            <person name="Tampe J."/>
            <person name="Heubner D."/>
            <person name="Wambutt R."/>
            <person name="Korn B."/>
            <person name="Klein M."/>
            <person name="Poustka A."/>
        </authorList>
    </citation>
    <scope>NUCLEOTIDE SEQUENCE [LARGE SCALE MRNA] (ISOFORM 2)</scope>
    <source>
        <tissue>Uterus</tissue>
    </source>
</reference>
<reference key="2">
    <citation type="journal article" date="2007" name="BMC Genomics">
        <title>The full-ORF clone resource of the German cDNA consortium.</title>
        <authorList>
            <person name="Bechtel S."/>
            <person name="Rosenfelder H."/>
            <person name="Duda A."/>
            <person name="Schmidt C.P."/>
            <person name="Ernst U."/>
            <person name="Wellenreuther R."/>
            <person name="Mehrle A."/>
            <person name="Schuster C."/>
            <person name="Bahr A."/>
            <person name="Bloecker H."/>
            <person name="Heubner D."/>
            <person name="Hoerlein A."/>
            <person name="Michel G."/>
            <person name="Wedler H."/>
            <person name="Koehrer K."/>
            <person name="Ottenwaelder B."/>
            <person name="Poustka A."/>
            <person name="Wiemann S."/>
            <person name="Schupp I."/>
        </authorList>
    </citation>
    <scope>NUCLEOTIDE SEQUENCE [LARGE SCALE MRNA] (ISOFORM 1)</scope>
</reference>
<reference key="3">
    <citation type="submission" date="2008-03" db="EMBL/GenBank/DDBJ databases">
        <authorList>
            <consortium name="NIEHS SNPs program"/>
        </authorList>
    </citation>
    <scope>NUCLEOTIDE SEQUENCE [GENOMIC DNA]</scope>
    <scope>VARIANTS SER-3 AND SER-244</scope>
</reference>
<reference key="4">
    <citation type="journal article" date="2006" name="Nature">
        <title>The DNA sequence and biological annotation of human chromosome 1.</title>
        <authorList>
            <person name="Gregory S.G."/>
            <person name="Barlow K.F."/>
            <person name="McLay K.E."/>
            <person name="Kaul R."/>
            <person name="Swarbreck D."/>
            <person name="Dunham A."/>
            <person name="Scott C.E."/>
            <person name="Howe K.L."/>
            <person name="Woodfine K."/>
            <person name="Spencer C.C.A."/>
            <person name="Jones M.C."/>
            <person name="Gillson C."/>
            <person name="Searle S."/>
            <person name="Zhou Y."/>
            <person name="Kokocinski F."/>
            <person name="McDonald L."/>
            <person name="Evans R."/>
            <person name="Phillips K."/>
            <person name="Atkinson A."/>
            <person name="Cooper R."/>
            <person name="Jones C."/>
            <person name="Hall R.E."/>
            <person name="Andrews T.D."/>
            <person name="Lloyd C."/>
            <person name="Ainscough R."/>
            <person name="Almeida J.P."/>
            <person name="Ambrose K.D."/>
            <person name="Anderson F."/>
            <person name="Andrew R.W."/>
            <person name="Ashwell R.I.S."/>
            <person name="Aubin K."/>
            <person name="Babbage A.K."/>
            <person name="Bagguley C.L."/>
            <person name="Bailey J."/>
            <person name="Beasley H."/>
            <person name="Bethel G."/>
            <person name="Bird C.P."/>
            <person name="Bray-Allen S."/>
            <person name="Brown J.Y."/>
            <person name="Brown A.J."/>
            <person name="Buckley D."/>
            <person name="Burton J."/>
            <person name="Bye J."/>
            <person name="Carder C."/>
            <person name="Chapman J.C."/>
            <person name="Clark S.Y."/>
            <person name="Clarke G."/>
            <person name="Clee C."/>
            <person name="Cobley V."/>
            <person name="Collier R.E."/>
            <person name="Corby N."/>
            <person name="Coville G.J."/>
            <person name="Davies J."/>
            <person name="Deadman R."/>
            <person name="Dunn M."/>
            <person name="Earthrowl M."/>
            <person name="Ellington A.G."/>
            <person name="Errington H."/>
            <person name="Frankish A."/>
            <person name="Frankland J."/>
            <person name="French L."/>
            <person name="Garner P."/>
            <person name="Garnett J."/>
            <person name="Gay L."/>
            <person name="Ghori M.R.J."/>
            <person name="Gibson R."/>
            <person name="Gilby L.M."/>
            <person name="Gillett W."/>
            <person name="Glithero R.J."/>
            <person name="Grafham D.V."/>
            <person name="Griffiths C."/>
            <person name="Griffiths-Jones S."/>
            <person name="Grocock R."/>
            <person name="Hammond S."/>
            <person name="Harrison E.S.I."/>
            <person name="Hart E."/>
            <person name="Haugen E."/>
            <person name="Heath P.D."/>
            <person name="Holmes S."/>
            <person name="Holt K."/>
            <person name="Howden P.J."/>
            <person name="Hunt A.R."/>
            <person name="Hunt S.E."/>
            <person name="Hunter G."/>
            <person name="Isherwood J."/>
            <person name="James R."/>
            <person name="Johnson C."/>
            <person name="Johnson D."/>
            <person name="Joy A."/>
            <person name="Kay M."/>
            <person name="Kershaw J.K."/>
            <person name="Kibukawa M."/>
            <person name="Kimberley A.M."/>
            <person name="King A."/>
            <person name="Knights A.J."/>
            <person name="Lad H."/>
            <person name="Laird G."/>
            <person name="Lawlor S."/>
            <person name="Leongamornlert D.A."/>
            <person name="Lloyd D.M."/>
            <person name="Loveland J."/>
            <person name="Lovell J."/>
            <person name="Lush M.J."/>
            <person name="Lyne R."/>
            <person name="Martin S."/>
            <person name="Mashreghi-Mohammadi M."/>
            <person name="Matthews L."/>
            <person name="Matthews N.S.W."/>
            <person name="McLaren S."/>
            <person name="Milne S."/>
            <person name="Mistry S."/>
            <person name="Moore M.J.F."/>
            <person name="Nickerson T."/>
            <person name="O'Dell C.N."/>
            <person name="Oliver K."/>
            <person name="Palmeiri A."/>
            <person name="Palmer S.A."/>
            <person name="Parker A."/>
            <person name="Patel D."/>
            <person name="Pearce A.V."/>
            <person name="Peck A.I."/>
            <person name="Pelan S."/>
            <person name="Phelps K."/>
            <person name="Phillimore B.J."/>
            <person name="Plumb R."/>
            <person name="Rajan J."/>
            <person name="Raymond C."/>
            <person name="Rouse G."/>
            <person name="Saenphimmachak C."/>
            <person name="Sehra H.K."/>
            <person name="Sheridan E."/>
            <person name="Shownkeen R."/>
            <person name="Sims S."/>
            <person name="Skuce C.D."/>
            <person name="Smith M."/>
            <person name="Steward C."/>
            <person name="Subramanian S."/>
            <person name="Sycamore N."/>
            <person name="Tracey A."/>
            <person name="Tromans A."/>
            <person name="Van Helmond Z."/>
            <person name="Wall M."/>
            <person name="Wallis J.M."/>
            <person name="White S."/>
            <person name="Whitehead S.L."/>
            <person name="Wilkinson J.E."/>
            <person name="Willey D.L."/>
            <person name="Williams H."/>
            <person name="Wilming L."/>
            <person name="Wray P.W."/>
            <person name="Wu Z."/>
            <person name="Coulson A."/>
            <person name="Vaudin M."/>
            <person name="Sulston J.E."/>
            <person name="Durbin R.M."/>
            <person name="Hubbard T."/>
            <person name="Wooster R."/>
            <person name="Dunham I."/>
            <person name="Carter N.P."/>
            <person name="McVean G."/>
            <person name="Ross M.T."/>
            <person name="Harrow J."/>
            <person name="Olson M.V."/>
            <person name="Beck S."/>
            <person name="Rogers J."/>
            <person name="Bentley D.R."/>
        </authorList>
    </citation>
    <scope>NUCLEOTIDE SEQUENCE [LARGE SCALE GENOMIC DNA]</scope>
</reference>
<reference key="5">
    <citation type="submission" date="2005-09" db="EMBL/GenBank/DDBJ databases">
        <authorList>
            <person name="Mural R.J."/>
            <person name="Istrail S."/>
            <person name="Sutton G.G."/>
            <person name="Florea L."/>
            <person name="Halpern A.L."/>
            <person name="Mobarry C.M."/>
            <person name="Lippert R."/>
            <person name="Walenz B."/>
            <person name="Shatkay H."/>
            <person name="Dew I."/>
            <person name="Miller J.R."/>
            <person name="Flanigan M.J."/>
            <person name="Edwards N.J."/>
            <person name="Bolanos R."/>
            <person name="Fasulo D."/>
            <person name="Halldorsson B.V."/>
            <person name="Hannenhalli S."/>
            <person name="Turner R."/>
            <person name="Yooseph S."/>
            <person name="Lu F."/>
            <person name="Nusskern D.R."/>
            <person name="Shue B.C."/>
            <person name="Zheng X.H."/>
            <person name="Zhong F."/>
            <person name="Delcher A.L."/>
            <person name="Huson D.H."/>
            <person name="Kravitz S.A."/>
            <person name="Mouchard L."/>
            <person name="Reinert K."/>
            <person name="Remington K.A."/>
            <person name="Clark A.G."/>
            <person name="Waterman M.S."/>
            <person name="Eichler E.E."/>
            <person name="Adams M.D."/>
            <person name="Hunkapiller M.W."/>
            <person name="Myers E.W."/>
            <person name="Venter J.C."/>
        </authorList>
    </citation>
    <scope>NUCLEOTIDE SEQUENCE [LARGE SCALE GENOMIC DNA]</scope>
</reference>
<reference key="6">
    <citation type="journal article" date="2004" name="Genome Res.">
        <title>The status, quality, and expansion of the NIH full-length cDNA project: the Mammalian Gene Collection (MGC).</title>
        <authorList>
            <consortium name="The MGC Project Team"/>
        </authorList>
    </citation>
    <scope>NUCLEOTIDE SEQUENCE [LARGE SCALE MRNA]</scope>
    <source>
        <tissue>Cervix</tissue>
        <tissue>Colon</tissue>
        <tissue>Lung</tissue>
    </source>
</reference>
<reference key="7">
    <citation type="journal article" date="2004" name="Nat. Genet.">
        <title>Complete sequencing and characterization of 21,243 full-length human cDNAs.</title>
        <authorList>
            <person name="Ota T."/>
            <person name="Suzuki Y."/>
            <person name="Nishikawa T."/>
            <person name="Otsuki T."/>
            <person name="Sugiyama T."/>
            <person name="Irie R."/>
            <person name="Wakamatsu A."/>
            <person name="Hayashi K."/>
            <person name="Sato H."/>
            <person name="Nagai K."/>
            <person name="Kimura K."/>
            <person name="Makita H."/>
            <person name="Sekine M."/>
            <person name="Obayashi M."/>
            <person name="Nishi T."/>
            <person name="Shibahara T."/>
            <person name="Tanaka T."/>
            <person name="Ishii S."/>
            <person name="Yamamoto J."/>
            <person name="Saito K."/>
            <person name="Kawai Y."/>
            <person name="Isono Y."/>
            <person name="Nakamura Y."/>
            <person name="Nagahari K."/>
            <person name="Murakami K."/>
            <person name="Yasuda T."/>
            <person name="Iwayanagi T."/>
            <person name="Wagatsuma M."/>
            <person name="Shiratori A."/>
            <person name="Sudo H."/>
            <person name="Hosoiri T."/>
            <person name="Kaku Y."/>
            <person name="Kodaira H."/>
            <person name="Kondo H."/>
            <person name="Sugawara M."/>
            <person name="Takahashi M."/>
            <person name="Kanda K."/>
            <person name="Yokoi T."/>
            <person name="Furuya T."/>
            <person name="Kikkawa E."/>
            <person name="Omura Y."/>
            <person name="Abe K."/>
            <person name="Kamihara K."/>
            <person name="Katsuta N."/>
            <person name="Sato K."/>
            <person name="Tanikawa M."/>
            <person name="Yamazaki M."/>
            <person name="Ninomiya K."/>
            <person name="Ishibashi T."/>
            <person name="Yamashita H."/>
            <person name="Murakawa K."/>
            <person name="Fujimori K."/>
            <person name="Tanai H."/>
            <person name="Kimata M."/>
            <person name="Watanabe M."/>
            <person name="Hiraoka S."/>
            <person name="Chiba Y."/>
            <person name="Ishida S."/>
            <person name="Ono Y."/>
            <person name="Takiguchi S."/>
            <person name="Watanabe S."/>
            <person name="Yosida M."/>
            <person name="Hotuta T."/>
            <person name="Kusano J."/>
            <person name="Kanehori K."/>
            <person name="Takahashi-Fujii A."/>
            <person name="Hara H."/>
            <person name="Tanase T.-O."/>
            <person name="Nomura Y."/>
            <person name="Togiya S."/>
            <person name="Komai F."/>
            <person name="Hara R."/>
            <person name="Takeuchi K."/>
            <person name="Arita M."/>
            <person name="Imose N."/>
            <person name="Musashino K."/>
            <person name="Yuuki H."/>
            <person name="Oshima A."/>
            <person name="Sasaki N."/>
            <person name="Aotsuka S."/>
            <person name="Yoshikawa Y."/>
            <person name="Matsunawa H."/>
            <person name="Ichihara T."/>
            <person name="Shiohata N."/>
            <person name="Sano S."/>
            <person name="Moriya S."/>
            <person name="Momiyama H."/>
            <person name="Satoh N."/>
            <person name="Takami S."/>
            <person name="Terashima Y."/>
            <person name="Suzuki O."/>
            <person name="Nakagawa S."/>
            <person name="Senoh A."/>
            <person name="Mizoguchi H."/>
            <person name="Goto Y."/>
            <person name="Shimizu F."/>
            <person name="Wakebe H."/>
            <person name="Hishigaki H."/>
            <person name="Watanabe T."/>
            <person name="Sugiyama A."/>
            <person name="Takemoto M."/>
            <person name="Kawakami B."/>
            <person name="Yamazaki M."/>
            <person name="Watanabe K."/>
            <person name="Kumagai A."/>
            <person name="Itakura S."/>
            <person name="Fukuzumi Y."/>
            <person name="Fujimori Y."/>
            <person name="Komiyama M."/>
            <person name="Tashiro H."/>
            <person name="Tanigami A."/>
            <person name="Fujiwara T."/>
            <person name="Ono T."/>
            <person name="Yamada K."/>
            <person name="Fujii Y."/>
            <person name="Ozaki K."/>
            <person name="Hirao M."/>
            <person name="Ohmori Y."/>
            <person name="Kawabata A."/>
            <person name="Hikiji T."/>
            <person name="Kobatake N."/>
            <person name="Inagaki H."/>
            <person name="Ikema Y."/>
            <person name="Okamoto S."/>
            <person name="Okitani R."/>
            <person name="Kawakami T."/>
            <person name="Noguchi S."/>
            <person name="Itoh T."/>
            <person name="Shigeta K."/>
            <person name="Senba T."/>
            <person name="Matsumura K."/>
            <person name="Nakajima Y."/>
            <person name="Mizuno T."/>
            <person name="Morinaga M."/>
            <person name="Sasaki M."/>
            <person name="Togashi T."/>
            <person name="Oyama M."/>
            <person name="Hata H."/>
            <person name="Watanabe M."/>
            <person name="Komatsu T."/>
            <person name="Mizushima-Sugano J."/>
            <person name="Satoh T."/>
            <person name="Shirai Y."/>
            <person name="Takahashi Y."/>
            <person name="Nakagawa K."/>
            <person name="Okumura K."/>
            <person name="Nagase T."/>
            <person name="Nomura N."/>
            <person name="Kikuchi H."/>
            <person name="Masuho Y."/>
            <person name="Yamashita R."/>
            <person name="Nakai K."/>
            <person name="Yada T."/>
            <person name="Nakamura Y."/>
            <person name="Ohara O."/>
            <person name="Isogai T."/>
            <person name="Sugano S."/>
        </authorList>
    </citation>
    <scope>NUCLEOTIDE SEQUENCE [LARGE SCALE MRNA] OF 193-335</scope>
    <source>
        <tissue>Carcinoma</tissue>
    </source>
</reference>
<reference key="8">
    <citation type="journal article" date="2011" name="BMC Syst. Biol.">
        <title>Initial characterization of the human central proteome.</title>
        <authorList>
            <person name="Burkard T.R."/>
            <person name="Planyavsky M."/>
            <person name="Kaupe I."/>
            <person name="Breitwieser F.P."/>
            <person name="Buerckstuemmer T."/>
            <person name="Bennett K.L."/>
            <person name="Superti-Furga G."/>
            <person name="Colinge J."/>
        </authorList>
    </citation>
    <scope>IDENTIFICATION BY MASS SPECTROMETRY [LARGE SCALE ANALYSIS]</scope>
</reference>
<reference key="9">
    <citation type="journal article" date="2011" name="Biochem. J.">
        <title>Reduction of N(omega)-hydroxy-L-arginine by the mitochondrial amidoxime reducing component (mARC).</title>
        <authorList>
            <person name="Kotthaus J."/>
            <person name="Wahl B."/>
            <person name="Havemeyer A."/>
            <person name="Kotthaus J."/>
            <person name="Schade D."/>
            <person name="Garbe-Schonberg D."/>
            <person name="Mendel R."/>
            <person name="Bittner F."/>
            <person name="Clement B."/>
        </authorList>
    </citation>
    <scope>FUNCTION</scope>
    <scope>BIOPHYSICOCHEMICAL PROPERTIES</scope>
    <scope>CATALYTIC ACTIVITY</scope>
</reference>
<reference key="10">
    <citation type="journal article" date="2014" name="J. Proteomics">
        <title>An enzyme assisted RP-RPLC approach for in-depth analysis of human liver phosphoproteome.</title>
        <authorList>
            <person name="Bian Y."/>
            <person name="Song C."/>
            <person name="Cheng K."/>
            <person name="Dong M."/>
            <person name="Wang F."/>
            <person name="Huang J."/>
            <person name="Sun D."/>
            <person name="Wang L."/>
            <person name="Ye M."/>
            <person name="Zou H."/>
        </authorList>
    </citation>
    <scope>IDENTIFICATION BY MASS SPECTROMETRY [LARGE SCALE ANALYSIS]</scope>
    <source>
        <tissue>Liver</tissue>
    </source>
</reference>
<reference key="11">
    <citation type="journal article" date="2015" name="Nat. Cell Biol.">
        <title>USP30 and parkin homeostatically regulate atypical ubiquitin chains on mitochondria.</title>
        <authorList>
            <person name="Cunningham C.N."/>
            <person name="Baughman J.M."/>
            <person name="Phu L."/>
            <person name="Tea J.S."/>
            <person name="Yu C."/>
            <person name="Coons M."/>
            <person name="Kirkpatrick D.S."/>
            <person name="Bingol B."/>
            <person name="Corn J.E."/>
        </authorList>
    </citation>
    <scope>UBIQUITINATION AT LYS-59; LYS-138; LYS-144; LYS-156; LYS-166; LYS-173; LYS-187; LYS-287 AND LYS-294</scope>
</reference>
<reference key="12">
    <citation type="journal article" date="2014" name="Drug Metab. Dispos.">
        <title>Functional characterization of protein variants encoded by non-synonymous SNPs in MARC1 and MARC2 in healthy Caucasians.</title>
        <authorList>
            <person name="Ott G."/>
            <person name="Reichmann D."/>
            <person name="Boerger C."/>
            <person name="Cascorbi I."/>
            <person name="Bittner F."/>
            <person name="Mendel R.R."/>
            <person name="Kunze T."/>
            <person name="Clement B."/>
            <person name="Havemeyer A."/>
        </authorList>
    </citation>
    <scope>VARIANTS SER-244 AND TRP-245</scope>
    <scope>CHARACTERIZATION OF VARIANTS SER-244 AND TRP-245</scope>
    <scope>BIOPHYSICOCHEMICAL PROPERTIES</scope>
    <scope>COFACTOR</scope>
</reference>
<gene>
    <name evidence="13" type="primary">MTARC2</name>
    <name type="synonym">MARC2</name>
    <name type="synonym">MOSC2</name>
</gene>
<sequence length="335" mass="38023">MGASSSSALARLGLPARPWPRWLGVAALGLAAVALGTVAWRRAWPRRRRRLQQVGTVAKLWIYPVKSCKGVPVSEAECTAMGLRSGNLRDRFWLVIKEDGHMVTARQEPRLVLISIIYENNCLIFRAPDMDQLVLPSKQPSSNKLHNCRIFGLDIKGRDCGNEAAKWFTNFLKTEAYRLVQFETNMKGRTSRKLLPTLDQNFQVAYPDYCPLLIMTDASLVDLNTRMEKKMKMENFRPNIVVTGCDAFEEDTWDELLIGSVEVKKVMACPRCILTTVDPDTGVIDRKQPLDTLKSYRLCDPSERELYKLSPLFGIYYSVEKIGSLRVGDPVYRMV</sequence>
<dbReference type="EC" id="1.7.-.-"/>
<dbReference type="EMBL" id="AL136931">
    <property type="protein sequence ID" value="CAB66865.1"/>
    <property type="molecule type" value="mRNA"/>
</dbReference>
<dbReference type="EMBL" id="AM393631">
    <property type="protein sequence ID" value="CAL38507.1"/>
    <property type="molecule type" value="mRNA"/>
</dbReference>
<dbReference type="EMBL" id="EU567145">
    <property type="protein sequence ID" value="ACB21048.1"/>
    <property type="molecule type" value="Genomic_DNA"/>
</dbReference>
<dbReference type="EMBL" id="AL359353">
    <property type="status" value="NOT_ANNOTATED_CDS"/>
    <property type="molecule type" value="Genomic_DNA"/>
</dbReference>
<dbReference type="EMBL" id="AL606726">
    <property type="status" value="NOT_ANNOTATED_CDS"/>
    <property type="molecule type" value="Genomic_DNA"/>
</dbReference>
<dbReference type="EMBL" id="CH471100">
    <property type="protein sequence ID" value="EAW93293.1"/>
    <property type="molecule type" value="Genomic_DNA"/>
</dbReference>
<dbReference type="EMBL" id="CH471100">
    <property type="protein sequence ID" value="EAW93294.1"/>
    <property type="molecule type" value="Genomic_DNA"/>
</dbReference>
<dbReference type="EMBL" id="BC011973">
    <property type="protein sequence ID" value="AAH11973.1"/>
    <property type="molecule type" value="mRNA"/>
</dbReference>
<dbReference type="EMBL" id="BC015829">
    <property type="protein sequence ID" value="AAH15829.2"/>
    <property type="molecule type" value="mRNA"/>
</dbReference>
<dbReference type="EMBL" id="BC016859">
    <property type="protein sequence ID" value="AAH16859.1"/>
    <property type="molecule type" value="mRNA"/>
</dbReference>
<dbReference type="EMBL" id="AK000612">
    <property type="protein sequence ID" value="BAA91287.1"/>
    <property type="status" value="ALT_INIT"/>
    <property type="molecule type" value="mRNA"/>
</dbReference>
<dbReference type="CCDS" id="CCDS1525.1">
    <molecule id="Q969Z3-1"/>
</dbReference>
<dbReference type="CCDS" id="CCDS81425.1">
    <molecule id="Q969Z3-2"/>
</dbReference>
<dbReference type="RefSeq" id="NP_001304267.1">
    <molecule id="Q969Z3-1"/>
    <property type="nucleotide sequence ID" value="NM_001317338.2"/>
</dbReference>
<dbReference type="RefSeq" id="NP_001317971.1">
    <molecule id="Q969Z3-2"/>
    <property type="nucleotide sequence ID" value="NM_001331042.2"/>
</dbReference>
<dbReference type="RefSeq" id="NP_060368.2">
    <molecule id="Q969Z3-1"/>
    <property type="nucleotide sequence ID" value="NM_017898.4"/>
</dbReference>
<dbReference type="SMR" id="Q969Z3"/>
<dbReference type="BioGRID" id="120329">
    <property type="interactions" value="49"/>
</dbReference>
<dbReference type="FunCoup" id="Q969Z3">
    <property type="interactions" value="860"/>
</dbReference>
<dbReference type="IntAct" id="Q969Z3">
    <property type="interactions" value="18"/>
</dbReference>
<dbReference type="MINT" id="Q969Z3"/>
<dbReference type="STRING" id="9606.ENSP00000355880"/>
<dbReference type="ChEMBL" id="CHEMBL4523423"/>
<dbReference type="iPTMnet" id="Q969Z3"/>
<dbReference type="PhosphoSitePlus" id="Q969Z3"/>
<dbReference type="SwissPalm" id="Q969Z3"/>
<dbReference type="BioMuta" id="MARC2"/>
<dbReference type="DMDM" id="74760692"/>
<dbReference type="jPOST" id="Q969Z3"/>
<dbReference type="MassIVE" id="Q969Z3"/>
<dbReference type="PaxDb" id="9606-ENSP00000355880"/>
<dbReference type="PeptideAtlas" id="Q969Z3"/>
<dbReference type="ProteomicsDB" id="75882">
    <molecule id="Q969Z3-1"/>
</dbReference>
<dbReference type="ProteomicsDB" id="75883">
    <molecule id="Q969Z3-2"/>
</dbReference>
<dbReference type="Pumba" id="Q969Z3"/>
<dbReference type="Antibodypedia" id="2381">
    <property type="antibodies" value="133 antibodies from 21 providers"/>
</dbReference>
<dbReference type="DNASU" id="54996"/>
<dbReference type="Ensembl" id="ENST00000359316.6">
    <molecule id="Q969Z3-2"/>
    <property type="protein sequence ID" value="ENSP00000352266.2"/>
    <property type="gene ID" value="ENSG00000117791.16"/>
</dbReference>
<dbReference type="Ensembl" id="ENST00000366913.8">
    <molecule id="Q969Z3-1"/>
    <property type="protein sequence ID" value="ENSP00000355880.3"/>
    <property type="gene ID" value="ENSG00000117791.16"/>
</dbReference>
<dbReference type="GeneID" id="54996"/>
<dbReference type="KEGG" id="hsa:54996"/>
<dbReference type="MANE-Select" id="ENST00000366913.8">
    <property type="protein sequence ID" value="ENSP00000355880.3"/>
    <property type="RefSeq nucleotide sequence ID" value="NM_017898.5"/>
    <property type="RefSeq protein sequence ID" value="NP_060368.2"/>
</dbReference>
<dbReference type="UCSC" id="uc001hmq.4">
    <molecule id="Q969Z3-1"/>
    <property type="organism name" value="human"/>
</dbReference>
<dbReference type="AGR" id="HGNC:26064"/>
<dbReference type="CTD" id="54996"/>
<dbReference type="DisGeNET" id="54996"/>
<dbReference type="GeneCards" id="MTARC2"/>
<dbReference type="HGNC" id="HGNC:26064">
    <property type="gene designation" value="MTARC2"/>
</dbReference>
<dbReference type="HPA" id="ENSG00000117791">
    <property type="expression patterns" value="Tissue enhanced (kidney, liver)"/>
</dbReference>
<dbReference type="MIM" id="614127">
    <property type="type" value="gene"/>
</dbReference>
<dbReference type="neXtProt" id="NX_Q969Z3"/>
<dbReference type="OpenTargets" id="ENSG00000117791"/>
<dbReference type="VEuPathDB" id="HostDB:ENSG00000117791"/>
<dbReference type="eggNOG" id="KOG2362">
    <property type="taxonomic scope" value="Eukaryota"/>
</dbReference>
<dbReference type="GeneTree" id="ENSGT00940000159665"/>
<dbReference type="HOGENOM" id="CLU_028286_6_2_1"/>
<dbReference type="InParanoid" id="Q969Z3"/>
<dbReference type="OMA" id="CCPLMIL"/>
<dbReference type="OrthoDB" id="17255at2759"/>
<dbReference type="PAN-GO" id="Q969Z3">
    <property type="GO annotations" value="4 GO annotations based on evolutionary models"/>
</dbReference>
<dbReference type="PhylomeDB" id="Q969Z3"/>
<dbReference type="TreeFam" id="TF316807"/>
<dbReference type="BRENDA" id="1.16.98.B1">
    <property type="organism ID" value="2681"/>
</dbReference>
<dbReference type="BRENDA" id="1.7.2.1">
    <property type="organism ID" value="2681"/>
</dbReference>
<dbReference type="PathwayCommons" id="Q969Z3"/>
<dbReference type="Reactome" id="R-HSA-211945">
    <property type="pathway name" value="Phase I - Functionalization of compounds"/>
</dbReference>
<dbReference type="SABIO-RK" id="Q969Z3"/>
<dbReference type="SignaLink" id="Q969Z3"/>
<dbReference type="BioGRID-ORCS" id="54996">
    <property type="hits" value="2 hits in 864 CRISPR screens"/>
</dbReference>
<dbReference type="CD-CODE" id="FB4E32DD">
    <property type="entry name" value="Presynaptic clusters and postsynaptic densities"/>
</dbReference>
<dbReference type="ChiTaRS" id="MARC2">
    <property type="organism name" value="human"/>
</dbReference>
<dbReference type="GeneWiki" id="MOSC2"/>
<dbReference type="GenomeRNAi" id="54996"/>
<dbReference type="Pharos" id="Q969Z3">
    <property type="development level" value="Tbio"/>
</dbReference>
<dbReference type="PRO" id="PR:Q969Z3"/>
<dbReference type="Proteomes" id="UP000005640">
    <property type="component" value="Chromosome 1"/>
</dbReference>
<dbReference type="RNAct" id="Q969Z3">
    <property type="molecule type" value="protein"/>
</dbReference>
<dbReference type="Bgee" id="ENSG00000117791">
    <property type="expression patterns" value="Expressed in right lobe of liver and 194 other cell types or tissues"/>
</dbReference>
<dbReference type="ExpressionAtlas" id="Q969Z3">
    <property type="expression patterns" value="baseline and differential"/>
</dbReference>
<dbReference type="GO" id="GO:0005741">
    <property type="term" value="C:mitochondrial outer membrane"/>
    <property type="evidence" value="ECO:0000304"/>
    <property type="project" value="Reactome"/>
</dbReference>
<dbReference type="GO" id="GO:0005739">
    <property type="term" value="C:mitochondrion"/>
    <property type="evidence" value="ECO:0000314"/>
    <property type="project" value="LIFEdb"/>
</dbReference>
<dbReference type="GO" id="GO:0005777">
    <property type="term" value="C:peroxisome"/>
    <property type="evidence" value="ECO:0007669"/>
    <property type="project" value="UniProtKB-SubCell"/>
</dbReference>
<dbReference type="GO" id="GO:0030151">
    <property type="term" value="F:molybdenum ion binding"/>
    <property type="evidence" value="ECO:0000314"/>
    <property type="project" value="UniProtKB"/>
</dbReference>
<dbReference type="GO" id="GO:0043546">
    <property type="term" value="F:molybdopterin cofactor binding"/>
    <property type="evidence" value="ECO:0000314"/>
    <property type="project" value="UniProtKB"/>
</dbReference>
<dbReference type="GO" id="GO:0008940">
    <property type="term" value="F:nitrate reductase activity"/>
    <property type="evidence" value="ECO:0000314"/>
    <property type="project" value="UniProtKB"/>
</dbReference>
<dbReference type="GO" id="GO:0098809">
    <property type="term" value="F:nitrite reductase activity"/>
    <property type="evidence" value="ECO:0000314"/>
    <property type="project" value="FlyBase"/>
</dbReference>
<dbReference type="GO" id="GO:0016661">
    <property type="term" value="F:oxidoreductase activity, acting on other nitrogenous compounds as donors"/>
    <property type="evidence" value="ECO:0000315"/>
    <property type="project" value="FlyBase"/>
</dbReference>
<dbReference type="GO" id="GO:0030170">
    <property type="term" value="F:pyridoxal phosphate binding"/>
    <property type="evidence" value="ECO:0007669"/>
    <property type="project" value="InterPro"/>
</dbReference>
<dbReference type="GO" id="GO:0070458">
    <property type="term" value="P:cellular detoxification of nitrogen compound"/>
    <property type="evidence" value="ECO:0000315"/>
    <property type="project" value="FlyBase"/>
</dbReference>
<dbReference type="GO" id="GO:0051410">
    <property type="term" value="P:detoxification of nitrogen compound"/>
    <property type="evidence" value="ECO:0000303"/>
    <property type="project" value="UniProtKB"/>
</dbReference>
<dbReference type="GO" id="GO:0042126">
    <property type="term" value="P:nitrate metabolic process"/>
    <property type="evidence" value="ECO:0000314"/>
    <property type="project" value="UniProtKB"/>
</dbReference>
<dbReference type="GO" id="GO:0006809">
    <property type="term" value="P:nitric oxide biosynthetic process"/>
    <property type="evidence" value="ECO:0000314"/>
    <property type="project" value="FlyBase"/>
</dbReference>
<dbReference type="InterPro" id="IPR005302">
    <property type="entry name" value="MoCF_Sase_C"/>
</dbReference>
<dbReference type="InterPro" id="IPR005303">
    <property type="entry name" value="MOCOS_middle"/>
</dbReference>
<dbReference type="InterPro" id="IPR011037">
    <property type="entry name" value="Pyrv_Knase-like_insert_dom_sf"/>
</dbReference>
<dbReference type="PANTHER" id="PTHR14237:SF27">
    <property type="entry name" value="MITOCHONDRIAL AMIDOXIME REDUCING COMPONENT 2"/>
    <property type="match status" value="1"/>
</dbReference>
<dbReference type="PANTHER" id="PTHR14237">
    <property type="entry name" value="MOLYBDOPTERIN COFACTOR SULFURASE MOSC"/>
    <property type="match status" value="1"/>
</dbReference>
<dbReference type="Pfam" id="PF03473">
    <property type="entry name" value="MOSC"/>
    <property type="match status" value="1"/>
</dbReference>
<dbReference type="Pfam" id="PF03476">
    <property type="entry name" value="MOSC_N"/>
    <property type="match status" value="1"/>
</dbReference>
<dbReference type="SUPFAM" id="SSF141673">
    <property type="entry name" value="MOSC N-terminal domain-like"/>
    <property type="match status" value="1"/>
</dbReference>
<dbReference type="SUPFAM" id="SSF50800">
    <property type="entry name" value="PK beta-barrel domain-like"/>
    <property type="match status" value="1"/>
</dbReference>
<dbReference type="PROSITE" id="PS51340">
    <property type="entry name" value="MOSC"/>
    <property type="match status" value="1"/>
</dbReference>
<feature type="transit peptide" description="Mitochondrion" evidence="3">
    <location>
        <begin position="1"/>
        <end position="35"/>
    </location>
</feature>
<feature type="chain" id="PRO_0000273340" description="Mitochondrial amidoxime reducing component 2">
    <location>
        <begin position="36"/>
        <end position="335"/>
    </location>
</feature>
<feature type="domain" description="MOSC" evidence="4">
    <location>
        <begin position="188"/>
        <end position="334"/>
    </location>
</feature>
<feature type="modified residue" description="N6-acetyllysine; alternate" evidence="2">
    <location>
        <position position="156"/>
    </location>
</feature>
<feature type="cross-link" description="Glycyl lysine isopeptide (Lys-Gly) (interchain with G-Cter in ubiquitin)" evidence="7">
    <location>
        <position position="59"/>
    </location>
</feature>
<feature type="cross-link" description="Glycyl lysine isopeptide (Lys-Gly) (interchain with G-Cter in ubiquitin)" evidence="7">
    <location>
        <position position="138"/>
    </location>
</feature>
<feature type="cross-link" description="Glycyl lysine isopeptide (Lys-Gly) (interchain with G-Cter in ubiquitin)" evidence="7">
    <location>
        <position position="144"/>
    </location>
</feature>
<feature type="cross-link" description="Glycyl lysine isopeptide (Lys-Gly) (interchain with G-Cter in ubiquitin); alternate" evidence="7">
    <location>
        <position position="156"/>
    </location>
</feature>
<feature type="cross-link" description="Glycyl lysine isopeptide (Lys-Gly) (interchain with G-Cter in ubiquitin)" evidence="7">
    <location>
        <position position="166"/>
    </location>
</feature>
<feature type="cross-link" description="Glycyl lysine isopeptide (Lys-Gly) (interchain with G-Cter in ubiquitin)" evidence="7">
    <location>
        <position position="173"/>
    </location>
</feature>
<feature type="cross-link" description="Glycyl lysine isopeptide (Lys-Gly) (interchain with G-Cter in ubiquitin)" evidence="7">
    <location>
        <position position="187"/>
    </location>
</feature>
<feature type="cross-link" description="Glycyl lysine isopeptide (Lys-Gly) (interchain with G-Cter in ubiquitin)" evidence="7">
    <location>
        <position position="287"/>
    </location>
</feature>
<feature type="cross-link" description="Glycyl lysine isopeptide (Lys-Gly) (interchain with G-Cter in ubiquitin)" evidence="7">
    <location>
        <position position="294"/>
    </location>
</feature>
<feature type="splice variant" id="VSP_022513" description="In isoform 2." evidence="9">
    <original>DTWDELL</original>
    <variation>ASATRRD</variation>
    <location>
        <begin position="251"/>
        <end position="257"/>
    </location>
</feature>
<feature type="splice variant" id="VSP_022514" description="In isoform 2." evidence="9">
    <location>
        <begin position="258"/>
        <end position="335"/>
    </location>
</feature>
<feature type="sequence variant" id="VAR_062275" description="In dbSNP:rs72472370." evidence="8">
    <original>A</original>
    <variation>S</variation>
    <location>
        <position position="3"/>
    </location>
</feature>
<feature type="sequence variant" id="VAR_030133" description="Decreased catalytic efficiency toward benzamidoxime; no effect on affinity for benzamidoxime; no effect on binding of the molybdenum cofactor; dbSNP:rs3795535." evidence="6 8">
    <original>G</original>
    <variation>S</variation>
    <location>
        <position position="244"/>
    </location>
</feature>
<feature type="sequence variant" id="VAR_070777" description="Decreased catalytic activity toward benzamidoxime; no effect on affinity for benzamidoxime; no effect on binding of the molybdenum cofactor; dbSNP:rs76664695." evidence="6">
    <original>C</original>
    <variation>W</variation>
    <location>
        <position position="245"/>
    </location>
</feature>
<feature type="sequence conflict" description="In Ref. 2; CAL38507." evidence="11" ref="2">
    <original>T</original>
    <variation>A</variation>
    <location>
        <position position="169"/>
    </location>
</feature>
<evidence type="ECO:0000250" key="1"/>
<evidence type="ECO:0000250" key="2">
    <source>
        <dbReference type="UniProtKB" id="Q922Q1"/>
    </source>
</evidence>
<evidence type="ECO:0000255" key="3"/>
<evidence type="ECO:0000255" key="4">
    <source>
        <dbReference type="PROSITE-ProRule" id="PRU00670"/>
    </source>
</evidence>
<evidence type="ECO:0000269" key="5">
    <source>
    </source>
</evidence>
<evidence type="ECO:0000269" key="6">
    <source>
    </source>
</evidence>
<evidence type="ECO:0000269" key="7">
    <source>
    </source>
</evidence>
<evidence type="ECO:0000269" key="8">
    <source ref="3"/>
</evidence>
<evidence type="ECO:0000303" key="9">
    <source>
    </source>
</evidence>
<evidence type="ECO:0000303" key="10">
    <source>
    </source>
</evidence>
<evidence type="ECO:0000305" key="11"/>
<evidence type="ECO:0000305" key="12">
    <source>
    </source>
</evidence>
<evidence type="ECO:0000312" key="13">
    <source>
        <dbReference type="HGNC" id="HGNC:26064"/>
    </source>
</evidence>
<comment type="function">
    <text evidence="5 6">Catalyzes the reduction of N-oxygenated molecules, acting as a counterpart of cytochrome P450 and flavin-containing monooxygenases in metabolic cycles (PubMed:21029045, PubMed:24423752). As a component of prodrug-converting system, reduces a multitude of N-hydroxylated prodrugs particularly amidoximes, leading to increased drug bioavailability (PubMed:21029045, PubMed:24423752). May be involved in mitochondrial N(omega)-hydroxy-L-arginine (NOHA) reduction, regulating endogenous nitric oxide levels and biosynthesis (PubMed:21029045). Postulated to cleave the N-OH bond of N-hydroxylated substrates in concert with electron transfer from NADH to cytochrome b5 reductase then to cytochrome b5, the ultimate electron donor that primes the active site for substrate reduction (PubMed:21029045).</text>
</comment>
<comment type="catalytic activity">
    <reaction evidence="5">
        <text>N(omega)-hydroxy-L-arginine + 2 Fe(II)-[cytochrome b5] + 2 H(+) = L-arginine + 2 Fe(III)-[cytochrome b5] + H2O</text>
        <dbReference type="Rhea" id="RHEA:61644"/>
        <dbReference type="Rhea" id="RHEA-COMP:10438"/>
        <dbReference type="Rhea" id="RHEA-COMP:10439"/>
        <dbReference type="ChEBI" id="CHEBI:15377"/>
        <dbReference type="ChEBI" id="CHEBI:15378"/>
        <dbReference type="ChEBI" id="CHEBI:29033"/>
        <dbReference type="ChEBI" id="CHEBI:29034"/>
        <dbReference type="ChEBI" id="CHEBI:32682"/>
        <dbReference type="ChEBI" id="CHEBI:60107"/>
    </reaction>
    <physiologicalReaction direction="left-to-right" evidence="12">
        <dbReference type="Rhea" id="RHEA:61645"/>
    </physiologicalReaction>
</comment>
<comment type="cofactor">
    <cofactor evidence="6">
        <name>Mo-molybdopterin</name>
        <dbReference type="ChEBI" id="CHEBI:71302"/>
    </cofactor>
    <text evidence="6">Binds 1 Mo-molybdopterin (Mo-MPT) cofactor per subunit.</text>
</comment>
<comment type="biophysicochemical properties">
    <kinetics>
        <KM evidence="5 6">830 uM for benzamidoxime</KM>
        <KM evidence="6">400 uM for benzamidoxime (at pH 6.0 and 37 degrees Celsius)</KM>
        <KM evidence="5 6">3 mM for NOHA</KM>
        <KM evidence="5 6">3.7 mM for NHAM</KM>
        <Vmax evidence="5 6">307.0 nmol/min/mg enzyme toward benzamidoxime</Vmax>
        <Vmax evidence="6">119.0 nmol/min/mg enzyme toward benzamidoxime (at pH 6.0 and 37 degrees Celsius)</Vmax>
        <Vmax evidence="5 6">373.0 nmol/min/mg enzyme toward NOHA</Vmax>
        <Vmax evidence="5 6">36.5 nmol/min/mg enzyme toward NHAM</Vmax>
    </kinetics>
</comment>
<comment type="subunit">
    <text evidence="1">Component of a complex composed of cytochrome b5, NADH-cytochrome b5 reductase (CYB5R3) and MTARC2.</text>
</comment>
<comment type="subcellular location">
    <subcellularLocation>
        <location>Mitochondrion outer membrane</location>
        <topology>Peripheral membrane protein</topology>
    </subcellularLocation>
    <subcellularLocation>
        <location evidence="1">Peroxisome</location>
    </subcellularLocation>
</comment>
<comment type="alternative products">
    <event type="alternative splicing"/>
    <isoform>
        <id>Q969Z3-1</id>
        <name>1</name>
        <sequence type="displayed"/>
    </isoform>
    <isoform>
        <id>Q969Z3-2</id>
        <name>2</name>
        <sequence type="described" ref="VSP_022513 VSP_022514"/>
    </isoform>
</comment>
<comment type="PTM">
    <text evidence="7">Ubiquitinated by PRKN during mitophagy, leading to its degradation and enhancement of mitophagy. Deubiquitinated by USP30.</text>
</comment>
<comment type="sequence caution" evidence="11">
    <conflict type="erroneous initiation">
        <sequence resource="EMBL-CDS" id="BAA91287"/>
    </conflict>
    <text>Truncated N-terminus.</text>
</comment>
<keyword id="KW-0007">Acetylation</keyword>
<keyword id="KW-0025">Alternative splicing</keyword>
<keyword id="KW-1017">Isopeptide bond</keyword>
<keyword id="KW-0472">Membrane</keyword>
<keyword id="KW-0496">Mitochondrion</keyword>
<keyword id="KW-1000">Mitochondrion outer membrane</keyword>
<keyword id="KW-0500">Molybdenum</keyword>
<keyword id="KW-0560">Oxidoreductase</keyword>
<keyword id="KW-0576">Peroxisome</keyword>
<keyword id="KW-1267">Proteomics identification</keyword>
<keyword id="KW-1185">Reference proteome</keyword>
<keyword id="KW-0809">Transit peptide</keyword>
<keyword id="KW-0832">Ubl conjugation</keyword>
<name>MARC2_HUMAN</name>
<organism>
    <name type="scientific">Homo sapiens</name>
    <name type="common">Human</name>
    <dbReference type="NCBI Taxonomy" id="9606"/>
    <lineage>
        <taxon>Eukaryota</taxon>
        <taxon>Metazoa</taxon>
        <taxon>Chordata</taxon>
        <taxon>Craniata</taxon>
        <taxon>Vertebrata</taxon>
        <taxon>Euteleostomi</taxon>
        <taxon>Mammalia</taxon>
        <taxon>Eutheria</taxon>
        <taxon>Euarchontoglires</taxon>
        <taxon>Primates</taxon>
        <taxon>Haplorrhini</taxon>
        <taxon>Catarrhini</taxon>
        <taxon>Hominidae</taxon>
        <taxon>Homo</taxon>
    </lineage>
</organism>